<organism>
    <name type="scientific">Escherichia coli (strain K12 / DH10B)</name>
    <dbReference type="NCBI Taxonomy" id="316385"/>
    <lineage>
        <taxon>Bacteria</taxon>
        <taxon>Pseudomonadati</taxon>
        <taxon>Pseudomonadota</taxon>
        <taxon>Gammaproteobacteria</taxon>
        <taxon>Enterobacterales</taxon>
        <taxon>Enterobacteriaceae</taxon>
        <taxon>Escherichia</taxon>
    </lineage>
</organism>
<proteinExistence type="inferred from homology"/>
<name>YAEP_ECODH</name>
<protein>
    <recommendedName>
        <fullName evidence="1">UPF0253 protein YaeP</fullName>
    </recommendedName>
</protein>
<accession>B1XD59</accession>
<gene>
    <name evidence="1" type="primary">yaeP</name>
    <name type="ordered locus">ECDH10B_0170</name>
</gene>
<comment type="similarity">
    <text evidence="1">Belongs to the UPF0253 family.</text>
</comment>
<evidence type="ECO:0000255" key="1">
    <source>
        <dbReference type="HAMAP-Rule" id="MF_01064"/>
    </source>
</evidence>
<reference key="1">
    <citation type="journal article" date="2008" name="J. Bacteriol.">
        <title>The complete genome sequence of Escherichia coli DH10B: insights into the biology of a laboratory workhorse.</title>
        <authorList>
            <person name="Durfee T."/>
            <person name="Nelson R."/>
            <person name="Baldwin S."/>
            <person name="Plunkett G. III"/>
            <person name="Burland V."/>
            <person name="Mau B."/>
            <person name="Petrosino J.F."/>
            <person name="Qin X."/>
            <person name="Muzny D.M."/>
            <person name="Ayele M."/>
            <person name="Gibbs R.A."/>
            <person name="Csorgo B."/>
            <person name="Posfai G."/>
            <person name="Weinstock G.M."/>
            <person name="Blattner F.R."/>
        </authorList>
    </citation>
    <scope>NUCLEOTIDE SEQUENCE [LARGE SCALE GENOMIC DNA]</scope>
    <source>
        <strain>K12 / DH10B</strain>
    </source>
</reference>
<dbReference type="EMBL" id="CP000948">
    <property type="protein sequence ID" value="ACB01368.1"/>
    <property type="molecule type" value="Genomic_DNA"/>
</dbReference>
<dbReference type="RefSeq" id="WP_000417058.1">
    <property type="nucleotide sequence ID" value="NC_010473.1"/>
</dbReference>
<dbReference type="SMR" id="B1XD59"/>
<dbReference type="KEGG" id="ecd:ECDH10B_0170"/>
<dbReference type="HOGENOM" id="CLU_190008_0_0_6"/>
<dbReference type="HAMAP" id="MF_01064">
    <property type="entry name" value="UPF0253"/>
    <property type="match status" value="1"/>
</dbReference>
<dbReference type="InterPro" id="IPR009624">
    <property type="entry name" value="UPF0253"/>
</dbReference>
<dbReference type="NCBIfam" id="NF003436">
    <property type="entry name" value="PRK04964.1"/>
    <property type="match status" value="1"/>
</dbReference>
<dbReference type="Pfam" id="PF06786">
    <property type="entry name" value="UPF0253"/>
    <property type="match status" value="1"/>
</dbReference>
<sequence length="66" mass="7214">MEKYCELIRKRYAEIASGDLGYVPDALGCVLKVLNEMAADDALSEAVREKAAYAAANLLVSDYVNE</sequence>
<feature type="chain" id="PRO_1000136536" description="UPF0253 protein YaeP">
    <location>
        <begin position="1"/>
        <end position="66"/>
    </location>
</feature>